<protein>
    <recommendedName>
        <fullName>Pre-mRNA-splicing factor slu-7</fullName>
    </recommendedName>
</protein>
<gene>
    <name type="primary">slu-7</name>
    <name type="ORF">NCU01950</name>
</gene>
<name>SLU7_NEUCR</name>
<keyword id="KW-0479">Metal-binding</keyword>
<keyword id="KW-0507">mRNA processing</keyword>
<keyword id="KW-0508">mRNA splicing</keyword>
<keyword id="KW-0539">Nucleus</keyword>
<keyword id="KW-1185">Reference proteome</keyword>
<keyword id="KW-0747">Spliceosome</keyword>
<keyword id="KW-0862">Zinc</keyword>
<keyword id="KW-0863">Zinc-finger</keyword>
<feature type="chain" id="PRO_0000218551" description="Pre-mRNA-splicing factor slu-7">
    <location>
        <begin position="1"/>
        <end position="416"/>
    </location>
</feature>
<feature type="zinc finger region" description="CCHC-type" evidence="2">
    <location>
        <begin position="95"/>
        <end position="112"/>
    </location>
</feature>
<feature type="region of interest" description="Disordered" evidence="3">
    <location>
        <begin position="1"/>
        <end position="34"/>
    </location>
</feature>
<feature type="region of interest" description="Disordered" evidence="3">
    <location>
        <begin position="168"/>
        <end position="213"/>
    </location>
</feature>
<feature type="compositionally biased region" description="Basic and acidic residues" evidence="3">
    <location>
        <begin position="168"/>
        <end position="179"/>
    </location>
</feature>
<feature type="compositionally biased region" description="Basic and acidic residues" evidence="3">
    <location>
        <begin position="188"/>
        <end position="213"/>
    </location>
</feature>
<organism>
    <name type="scientific">Neurospora crassa (strain ATCC 24698 / 74-OR23-1A / CBS 708.71 / DSM 1257 / FGSC 987)</name>
    <dbReference type="NCBI Taxonomy" id="367110"/>
    <lineage>
        <taxon>Eukaryota</taxon>
        <taxon>Fungi</taxon>
        <taxon>Dikarya</taxon>
        <taxon>Ascomycota</taxon>
        <taxon>Pezizomycotina</taxon>
        <taxon>Sordariomycetes</taxon>
        <taxon>Sordariomycetidae</taxon>
        <taxon>Sordariales</taxon>
        <taxon>Sordariaceae</taxon>
        <taxon>Neurospora</taxon>
    </lineage>
</organism>
<reference key="1">
    <citation type="journal article" date="2003" name="Nature">
        <title>The genome sequence of the filamentous fungus Neurospora crassa.</title>
        <authorList>
            <person name="Galagan J.E."/>
            <person name="Calvo S.E."/>
            <person name="Borkovich K.A."/>
            <person name="Selker E.U."/>
            <person name="Read N.D."/>
            <person name="Jaffe D.B."/>
            <person name="FitzHugh W."/>
            <person name="Ma L.-J."/>
            <person name="Smirnov S."/>
            <person name="Purcell S."/>
            <person name="Rehman B."/>
            <person name="Elkins T."/>
            <person name="Engels R."/>
            <person name="Wang S."/>
            <person name="Nielsen C.B."/>
            <person name="Butler J."/>
            <person name="Endrizzi M."/>
            <person name="Qui D."/>
            <person name="Ianakiev P."/>
            <person name="Bell-Pedersen D."/>
            <person name="Nelson M.A."/>
            <person name="Werner-Washburne M."/>
            <person name="Selitrennikoff C.P."/>
            <person name="Kinsey J.A."/>
            <person name="Braun E.L."/>
            <person name="Zelter A."/>
            <person name="Schulte U."/>
            <person name="Kothe G.O."/>
            <person name="Jedd G."/>
            <person name="Mewes H.-W."/>
            <person name="Staben C."/>
            <person name="Marcotte E."/>
            <person name="Greenberg D."/>
            <person name="Roy A."/>
            <person name="Foley K."/>
            <person name="Naylor J."/>
            <person name="Stange-Thomann N."/>
            <person name="Barrett R."/>
            <person name="Gnerre S."/>
            <person name="Kamal M."/>
            <person name="Kamvysselis M."/>
            <person name="Mauceli E.W."/>
            <person name="Bielke C."/>
            <person name="Rudd S."/>
            <person name="Frishman D."/>
            <person name="Krystofova S."/>
            <person name="Rasmussen C."/>
            <person name="Metzenberg R.L."/>
            <person name="Perkins D.D."/>
            <person name="Kroken S."/>
            <person name="Cogoni C."/>
            <person name="Macino G."/>
            <person name="Catcheside D.E.A."/>
            <person name="Li W."/>
            <person name="Pratt R.J."/>
            <person name="Osmani S.A."/>
            <person name="DeSouza C.P.C."/>
            <person name="Glass N.L."/>
            <person name="Orbach M.J."/>
            <person name="Berglund J.A."/>
            <person name="Voelker R."/>
            <person name="Yarden O."/>
            <person name="Plamann M."/>
            <person name="Seiler S."/>
            <person name="Dunlap J.C."/>
            <person name="Radford A."/>
            <person name="Aramayo R."/>
            <person name="Natvig D.O."/>
            <person name="Alex L.A."/>
            <person name="Mannhaupt G."/>
            <person name="Ebbole D.J."/>
            <person name="Freitag M."/>
            <person name="Paulsen I."/>
            <person name="Sachs M.S."/>
            <person name="Lander E.S."/>
            <person name="Nusbaum C."/>
            <person name="Birren B.W."/>
        </authorList>
    </citation>
    <scope>NUCLEOTIDE SEQUENCE [LARGE SCALE GENOMIC DNA]</scope>
    <source>
        <strain>ATCC 24698 / 74-OR23-1A / CBS 708.71 / DSM 1257 / FGSC 987</strain>
    </source>
</reference>
<proteinExistence type="inferred from homology"/>
<comment type="function">
    <text evidence="1">Involved in pre-mRNA splicing.</text>
</comment>
<comment type="subunit">
    <text evidence="1">Associated with the spliceosome.</text>
</comment>
<comment type="subcellular location">
    <subcellularLocation>
        <location evidence="1">Nucleus</location>
    </subcellularLocation>
</comment>
<comment type="similarity">
    <text evidence="4">Belongs to the SLU7 family.</text>
</comment>
<accession>Q7SDY6</accession>
<sequence>MPPPPPNRREQATAAPSSTDKSETGAGAARKEDNIYIPSYISKQPFYVSGLDNEEGDSLLHQRARQQEEDKAAQAAALLARGKKAGPARTKWVKGACENCGAMGHKKKDCLERPRKFGAKATGKDIQADRIVRDVKLGYEAKRDVYSAYDPKQYMEVVEEYNMLEEARRALQGDQKTPDGEGADGPEDDKSGFKYDEESDMGRDRATTKQSMRIREDTAKYLLNLDSDSAKYNPKKRALVDAGAIADKSAALFAEESFLRASGEAAEFEKAQRYAWEAQERSGDTSLHLQANPTAGEILRKKESEEREAKRRKRAEELANQYGTQPVISDALRETIKESETFVEYDEAGLIKGAPKKVGKSKYLEDVYINNHTSVWGSWWSDFRWGYACCHSFVKNSYCTGEAGIAASEKADAWDK</sequence>
<evidence type="ECO:0000250" key="1"/>
<evidence type="ECO:0000255" key="2">
    <source>
        <dbReference type="PROSITE-ProRule" id="PRU00047"/>
    </source>
</evidence>
<evidence type="ECO:0000256" key="3">
    <source>
        <dbReference type="SAM" id="MobiDB-lite"/>
    </source>
</evidence>
<evidence type="ECO:0000305" key="4"/>
<dbReference type="EMBL" id="CM002236">
    <property type="protein sequence ID" value="EAA34998.1"/>
    <property type="molecule type" value="Genomic_DNA"/>
</dbReference>
<dbReference type="RefSeq" id="XP_964234.1">
    <property type="nucleotide sequence ID" value="XM_959141.2"/>
</dbReference>
<dbReference type="SMR" id="Q7SDY6"/>
<dbReference type="FunCoup" id="Q7SDY6">
    <property type="interactions" value="470"/>
</dbReference>
<dbReference type="STRING" id="367110.Q7SDY6"/>
<dbReference type="PaxDb" id="5141-EFNCRP00000001173"/>
<dbReference type="EnsemblFungi" id="EAA34998">
    <property type="protein sequence ID" value="EAA34998"/>
    <property type="gene ID" value="NCU01950"/>
</dbReference>
<dbReference type="GeneID" id="3880383"/>
<dbReference type="KEGG" id="ncr:NCU01950"/>
<dbReference type="VEuPathDB" id="FungiDB:NCU01950"/>
<dbReference type="HOGENOM" id="CLU_019317_3_1_1"/>
<dbReference type="InParanoid" id="Q7SDY6"/>
<dbReference type="OrthoDB" id="249612at2759"/>
<dbReference type="Proteomes" id="UP000001805">
    <property type="component" value="Chromosome 1, Linkage Group I"/>
</dbReference>
<dbReference type="GO" id="GO:0005681">
    <property type="term" value="C:spliceosomal complex"/>
    <property type="evidence" value="ECO:0000318"/>
    <property type="project" value="GO_Central"/>
</dbReference>
<dbReference type="GO" id="GO:0030628">
    <property type="term" value="F:pre-mRNA 3'-splice site binding"/>
    <property type="evidence" value="ECO:0007669"/>
    <property type="project" value="InterPro"/>
</dbReference>
<dbReference type="GO" id="GO:0008270">
    <property type="term" value="F:zinc ion binding"/>
    <property type="evidence" value="ECO:0007669"/>
    <property type="project" value="UniProtKB-KW"/>
</dbReference>
<dbReference type="GO" id="GO:0000398">
    <property type="term" value="P:mRNA splicing, via spliceosome"/>
    <property type="evidence" value="ECO:0007669"/>
    <property type="project" value="InterPro"/>
</dbReference>
<dbReference type="GO" id="GO:0008380">
    <property type="term" value="P:RNA splicing"/>
    <property type="evidence" value="ECO:0000318"/>
    <property type="project" value="GO_Central"/>
</dbReference>
<dbReference type="InterPro" id="IPR021715">
    <property type="entry name" value="Slu7_dom"/>
</dbReference>
<dbReference type="InterPro" id="IPR039974">
    <property type="entry name" value="Splicing_factor_SLU7"/>
</dbReference>
<dbReference type="InterPro" id="IPR001878">
    <property type="entry name" value="Znf_CCHC"/>
</dbReference>
<dbReference type="PANTHER" id="PTHR12942:SF2">
    <property type="entry name" value="PRE-MRNA-SPLICING FACTOR SLU7"/>
    <property type="match status" value="1"/>
</dbReference>
<dbReference type="PANTHER" id="PTHR12942">
    <property type="entry name" value="STEP II SPLICING FACTOR SLU7"/>
    <property type="match status" value="1"/>
</dbReference>
<dbReference type="Pfam" id="PF11708">
    <property type="entry name" value="Slu7"/>
    <property type="match status" value="1"/>
</dbReference>
<dbReference type="PROSITE" id="PS50158">
    <property type="entry name" value="ZF_CCHC"/>
    <property type="match status" value="1"/>
</dbReference>